<dbReference type="EMBL" id="D50617">
    <property type="protein sequence ID" value="BAA09178.1"/>
    <property type="molecule type" value="Genomic_DNA"/>
</dbReference>
<dbReference type="PIR" id="S56192">
    <property type="entry name" value="S56192"/>
</dbReference>
<dbReference type="IntAct" id="P43541">
    <property type="interactions" value="1"/>
</dbReference>
<dbReference type="MINT" id="P43541"/>
<dbReference type="STRING" id="4932.YFL063W"/>
<dbReference type="PaxDb" id="4932-YFL063W"/>
<dbReference type="EnsemblFungi" id="YFL063W_mRNA">
    <property type="protein sequence ID" value="YFL063W"/>
    <property type="gene ID" value="YFL063W"/>
</dbReference>
<dbReference type="AGR" id="SGD:S000001831"/>
<dbReference type="SGD" id="S000001831">
    <property type="gene designation" value="YFL063W"/>
</dbReference>
<dbReference type="GeneTree" id="ENSGT00940000177535"/>
<dbReference type="HOGENOM" id="CLU_1994394_0_0_1"/>
<dbReference type="InterPro" id="IPR007414">
    <property type="entry name" value="DUF468"/>
</dbReference>
<dbReference type="Pfam" id="PF04318">
    <property type="entry name" value="DUF468"/>
    <property type="match status" value="1"/>
</dbReference>
<protein>
    <recommendedName>
        <fullName>Putative UPF0320 protein YFL063W</fullName>
    </recommendedName>
</protein>
<feature type="chain" id="PRO_0000211372" description="Putative UPF0320 protein YFL063W">
    <location>
        <begin position="1"/>
        <end position="151"/>
    </location>
</feature>
<gene>
    <name type="ordered locus">YFL063W</name>
</gene>
<proteinExistence type="uncertain"/>
<accession>P43541</accession>
<comment type="miscellaneous">
    <text evidence="1">Contained within a telomeric X element core sequence.</text>
</comment>
<comment type="similarity">
    <text evidence="1">Belongs to the UPF0320 family.</text>
</comment>
<comment type="caution">
    <text evidence="2">Product of a dubious gene prediction unlikely to encode a functional protein. Because of that it is not part of the S.cerevisiae S288c complete/reference proteome set.</text>
</comment>
<organism>
    <name type="scientific">Saccharomyces cerevisiae (strain ATCC 204508 / S288c)</name>
    <name type="common">Baker's yeast</name>
    <dbReference type="NCBI Taxonomy" id="559292"/>
    <lineage>
        <taxon>Eukaryota</taxon>
        <taxon>Fungi</taxon>
        <taxon>Dikarya</taxon>
        <taxon>Ascomycota</taxon>
        <taxon>Saccharomycotina</taxon>
        <taxon>Saccharomycetes</taxon>
        <taxon>Saccharomycetales</taxon>
        <taxon>Saccharomycetaceae</taxon>
        <taxon>Saccharomyces</taxon>
    </lineage>
</organism>
<name>YFG3_YEAST</name>
<reference key="1">
    <citation type="journal article" date="1995" name="Nat. Genet.">
        <title>Analysis of the nucleotide sequence of chromosome VI from Saccharomyces cerevisiae.</title>
        <authorList>
            <person name="Murakami Y."/>
            <person name="Naitou M."/>
            <person name="Hagiwara H."/>
            <person name="Shibata T."/>
            <person name="Ozawa M."/>
            <person name="Sasanuma S."/>
            <person name="Sasanuma M."/>
            <person name="Tsuchiya Y."/>
            <person name="Soeda E."/>
            <person name="Yokoyama K."/>
            <person name="Yamazaki M."/>
            <person name="Tashiro H."/>
            <person name="Eki T."/>
        </authorList>
    </citation>
    <scope>NUCLEOTIDE SEQUENCE [LARGE SCALE GENOMIC DNA]</scope>
    <source>
        <strain>ATCC 204508 / S288c</strain>
    </source>
</reference>
<reference key="2">
    <citation type="journal article" date="2014" name="G3 (Bethesda)">
        <title>The reference genome sequence of Saccharomyces cerevisiae: Then and now.</title>
        <authorList>
            <person name="Engel S.R."/>
            <person name="Dietrich F.S."/>
            <person name="Fisk D.G."/>
            <person name="Binkley G."/>
            <person name="Balakrishnan R."/>
            <person name="Costanzo M.C."/>
            <person name="Dwight S.S."/>
            <person name="Hitz B.C."/>
            <person name="Karra K."/>
            <person name="Nash R.S."/>
            <person name="Weng S."/>
            <person name="Wong E.D."/>
            <person name="Lloyd P."/>
            <person name="Skrzypek M.S."/>
            <person name="Miyasato S.R."/>
            <person name="Simison M."/>
            <person name="Cherry J.M."/>
        </authorList>
    </citation>
    <scope>GENOME REANNOTATION</scope>
    <source>
        <strain>ATCC 204508 / S288c</strain>
    </source>
</reference>
<evidence type="ECO:0000305" key="1"/>
<evidence type="ECO:0000305" key="2">
    <source>
    </source>
</evidence>
<sequence length="151" mass="17473">MIVNNAHILTLPIPYHAPSVILTITCILIRHTHTDATIVYTISTYPTFTFHSMAHLSLHEYKCTHIIMHGTCLSGLYPVPFTHNSHYYPHFNIYILFRGPKYCINALNTYVIPLFHRILTTQFIYTYANITKKSPLKSPKHKNILSFNNNT</sequence>